<organism>
    <name type="scientific">Shewanella denitrificans (strain OS217 / ATCC BAA-1090 / DSM 15013)</name>
    <dbReference type="NCBI Taxonomy" id="318161"/>
    <lineage>
        <taxon>Bacteria</taxon>
        <taxon>Pseudomonadati</taxon>
        <taxon>Pseudomonadota</taxon>
        <taxon>Gammaproteobacteria</taxon>
        <taxon>Alteromonadales</taxon>
        <taxon>Shewanellaceae</taxon>
        <taxon>Shewanella</taxon>
    </lineage>
</organism>
<gene>
    <name evidence="1" type="primary">lolB</name>
    <name type="ordered locus">Sden_0918</name>
</gene>
<evidence type="ECO:0000255" key="1">
    <source>
        <dbReference type="HAMAP-Rule" id="MF_00233"/>
    </source>
</evidence>
<name>LOLB_SHEDO</name>
<protein>
    <recommendedName>
        <fullName evidence="1">Outer-membrane lipoprotein LolB</fullName>
    </recommendedName>
</protein>
<keyword id="KW-0998">Cell outer membrane</keyword>
<keyword id="KW-0143">Chaperone</keyword>
<keyword id="KW-0449">Lipoprotein</keyword>
<keyword id="KW-0472">Membrane</keyword>
<keyword id="KW-0564">Palmitate</keyword>
<keyword id="KW-0653">Protein transport</keyword>
<keyword id="KW-1185">Reference proteome</keyword>
<keyword id="KW-0732">Signal</keyword>
<keyword id="KW-0813">Transport</keyword>
<sequence length="203" mass="22466">MPVNLNHTLLLCLLVAASLLSGCSSTLGEQYQTLNVSQSKQAKAWELQGKIAVKSPTDKFSTNLYWFHLGEENQLSLTTMLGTTVLTLNSKPGLARLEVDGKEYVDSNPQDLLEAVSGWSIPLDNLPLWITGQVGVNDEISAYHDDGLIKSLISPAPEHNWQVSFLSWQQQSGASVPKQIKIERAGVQVRIQINRWQALKTQQ</sequence>
<dbReference type="EMBL" id="CP000302">
    <property type="protein sequence ID" value="ABE54206.1"/>
    <property type="molecule type" value="Genomic_DNA"/>
</dbReference>
<dbReference type="RefSeq" id="WP_011495370.1">
    <property type="nucleotide sequence ID" value="NC_007954.1"/>
</dbReference>
<dbReference type="SMR" id="Q12QS0"/>
<dbReference type="STRING" id="318161.Sden_0918"/>
<dbReference type="KEGG" id="sdn:Sden_0918"/>
<dbReference type="eggNOG" id="COG3017">
    <property type="taxonomic scope" value="Bacteria"/>
</dbReference>
<dbReference type="HOGENOM" id="CLU_092816_1_0_6"/>
<dbReference type="OrthoDB" id="9797618at2"/>
<dbReference type="Proteomes" id="UP000001982">
    <property type="component" value="Chromosome"/>
</dbReference>
<dbReference type="GO" id="GO:0009279">
    <property type="term" value="C:cell outer membrane"/>
    <property type="evidence" value="ECO:0007669"/>
    <property type="project" value="UniProtKB-SubCell"/>
</dbReference>
<dbReference type="GO" id="GO:0044874">
    <property type="term" value="P:lipoprotein localization to outer membrane"/>
    <property type="evidence" value="ECO:0007669"/>
    <property type="project" value="UniProtKB-UniRule"/>
</dbReference>
<dbReference type="GO" id="GO:0015031">
    <property type="term" value="P:protein transport"/>
    <property type="evidence" value="ECO:0007669"/>
    <property type="project" value="UniProtKB-KW"/>
</dbReference>
<dbReference type="CDD" id="cd16326">
    <property type="entry name" value="LolB"/>
    <property type="match status" value="1"/>
</dbReference>
<dbReference type="Gene3D" id="2.50.20.10">
    <property type="entry name" value="Lipoprotein localisation LolA/LolB/LppX"/>
    <property type="match status" value="1"/>
</dbReference>
<dbReference type="HAMAP" id="MF_00233">
    <property type="entry name" value="LolB"/>
    <property type="match status" value="1"/>
</dbReference>
<dbReference type="InterPro" id="IPR029046">
    <property type="entry name" value="LolA/LolB/LppX"/>
</dbReference>
<dbReference type="InterPro" id="IPR004565">
    <property type="entry name" value="OM_lipoprot_LolB"/>
</dbReference>
<dbReference type="NCBIfam" id="TIGR00548">
    <property type="entry name" value="lolB"/>
    <property type="match status" value="1"/>
</dbReference>
<dbReference type="Pfam" id="PF03550">
    <property type="entry name" value="LolB"/>
    <property type="match status" value="1"/>
</dbReference>
<dbReference type="SUPFAM" id="SSF89392">
    <property type="entry name" value="Prokaryotic lipoproteins and lipoprotein localization factors"/>
    <property type="match status" value="1"/>
</dbReference>
<accession>Q12QS0</accession>
<reference key="1">
    <citation type="submission" date="2006-03" db="EMBL/GenBank/DDBJ databases">
        <title>Complete sequence of Shewanella denitrificans OS217.</title>
        <authorList>
            <consortium name="US DOE Joint Genome Institute"/>
            <person name="Copeland A."/>
            <person name="Lucas S."/>
            <person name="Lapidus A."/>
            <person name="Barry K."/>
            <person name="Detter J.C."/>
            <person name="Glavina del Rio T."/>
            <person name="Hammon N."/>
            <person name="Israni S."/>
            <person name="Dalin E."/>
            <person name="Tice H."/>
            <person name="Pitluck S."/>
            <person name="Brettin T."/>
            <person name="Bruce D."/>
            <person name="Han C."/>
            <person name="Tapia R."/>
            <person name="Gilna P."/>
            <person name="Kiss H."/>
            <person name="Schmutz J."/>
            <person name="Larimer F."/>
            <person name="Land M."/>
            <person name="Hauser L."/>
            <person name="Kyrpides N."/>
            <person name="Lykidis A."/>
            <person name="Richardson P."/>
        </authorList>
    </citation>
    <scope>NUCLEOTIDE SEQUENCE [LARGE SCALE GENOMIC DNA]</scope>
    <source>
        <strain>OS217 / ATCC BAA-1090 / DSM 15013</strain>
    </source>
</reference>
<feature type="signal peptide" evidence="1">
    <location>
        <begin position="1"/>
        <end position="22"/>
    </location>
</feature>
<feature type="chain" id="PRO_0000336617" description="Outer-membrane lipoprotein LolB">
    <location>
        <begin position="23"/>
        <end position="203"/>
    </location>
</feature>
<feature type="lipid moiety-binding region" description="N-palmitoyl cysteine" evidence="1">
    <location>
        <position position="23"/>
    </location>
</feature>
<feature type="lipid moiety-binding region" description="S-diacylglycerol cysteine" evidence="1">
    <location>
        <position position="23"/>
    </location>
</feature>
<proteinExistence type="inferred from homology"/>
<comment type="function">
    <text evidence="1">Plays a critical role in the incorporation of lipoproteins in the outer membrane after they are released by the LolA protein.</text>
</comment>
<comment type="subunit">
    <text evidence="1">Monomer.</text>
</comment>
<comment type="subcellular location">
    <subcellularLocation>
        <location evidence="1">Cell outer membrane</location>
        <topology evidence="1">Lipid-anchor</topology>
    </subcellularLocation>
</comment>
<comment type="similarity">
    <text evidence="1">Belongs to the LolB family.</text>
</comment>